<dbReference type="EC" id="2.5.1.78" evidence="1"/>
<dbReference type="EMBL" id="CP000950">
    <property type="protein sequence ID" value="ACA69526.1"/>
    <property type="molecule type" value="Genomic_DNA"/>
</dbReference>
<dbReference type="SMR" id="B1JIE2"/>
<dbReference type="KEGG" id="ypy:YPK_3257"/>
<dbReference type="PATRIC" id="fig|502800.11.peg.3986"/>
<dbReference type="UniPathway" id="UPA00275">
    <property type="reaction ID" value="UER00404"/>
</dbReference>
<dbReference type="GO" id="GO:0005829">
    <property type="term" value="C:cytosol"/>
    <property type="evidence" value="ECO:0007669"/>
    <property type="project" value="TreeGrafter"/>
</dbReference>
<dbReference type="GO" id="GO:0009349">
    <property type="term" value="C:riboflavin synthase complex"/>
    <property type="evidence" value="ECO:0007669"/>
    <property type="project" value="InterPro"/>
</dbReference>
<dbReference type="GO" id="GO:0000906">
    <property type="term" value="F:6,7-dimethyl-8-ribityllumazine synthase activity"/>
    <property type="evidence" value="ECO:0007669"/>
    <property type="project" value="UniProtKB-UniRule"/>
</dbReference>
<dbReference type="GO" id="GO:0009231">
    <property type="term" value="P:riboflavin biosynthetic process"/>
    <property type="evidence" value="ECO:0007669"/>
    <property type="project" value="UniProtKB-UniRule"/>
</dbReference>
<dbReference type="CDD" id="cd09209">
    <property type="entry name" value="Lumazine_synthase-I"/>
    <property type="match status" value="1"/>
</dbReference>
<dbReference type="FunFam" id="3.40.50.960:FF:000001">
    <property type="entry name" value="6,7-dimethyl-8-ribityllumazine synthase"/>
    <property type="match status" value="1"/>
</dbReference>
<dbReference type="Gene3D" id="3.40.50.960">
    <property type="entry name" value="Lumazine/riboflavin synthase"/>
    <property type="match status" value="1"/>
</dbReference>
<dbReference type="HAMAP" id="MF_00178">
    <property type="entry name" value="Lumazine_synth"/>
    <property type="match status" value="1"/>
</dbReference>
<dbReference type="InterPro" id="IPR034964">
    <property type="entry name" value="LS"/>
</dbReference>
<dbReference type="InterPro" id="IPR002180">
    <property type="entry name" value="LS/RS"/>
</dbReference>
<dbReference type="InterPro" id="IPR036467">
    <property type="entry name" value="LS/RS_sf"/>
</dbReference>
<dbReference type="NCBIfam" id="TIGR00114">
    <property type="entry name" value="lumazine-synth"/>
    <property type="match status" value="1"/>
</dbReference>
<dbReference type="NCBIfam" id="NF000812">
    <property type="entry name" value="PRK00061.1-4"/>
    <property type="match status" value="1"/>
</dbReference>
<dbReference type="PANTHER" id="PTHR21058:SF0">
    <property type="entry name" value="6,7-DIMETHYL-8-RIBITYLLUMAZINE SYNTHASE"/>
    <property type="match status" value="1"/>
</dbReference>
<dbReference type="PANTHER" id="PTHR21058">
    <property type="entry name" value="6,7-DIMETHYL-8-RIBITYLLUMAZINE SYNTHASE DMRL SYNTHASE LUMAZINE SYNTHASE"/>
    <property type="match status" value="1"/>
</dbReference>
<dbReference type="Pfam" id="PF00885">
    <property type="entry name" value="DMRL_synthase"/>
    <property type="match status" value="1"/>
</dbReference>
<dbReference type="SUPFAM" id="SSF52121">
    <property type="entry name" value="Lumazine synthase"/>
    <property type="match status" value="1"/>
</dbReference>
<evidence type="ECO:0000255" key="1">
    <source>
        <dbReference type="HAMAP-Rule" id="MF_00178"/>
    </source>
</evidence>
<gene>
    <name evidence="1" type="primary">ribH</name>
    <name type="ordered locus">YPK_3257</name>
</gene>
<feature type="chain" id="PRO_1000098257" description="6,7-dimethyl-8-ribityllumazine synthase">
    <location>
        <begin position="1"/>
        <end position="156"/>
    </location>
</feature>
<feature type="active site" description="Proton donor" evidence="1">
    <location>
        <position position="89"/>
    </location>
</feature>
<feature type="binding site" evidence="1">
    <location>
        <position position="22"/>
    </location>
    <ligand>
        <name>5-amino-6-(D-ribitylamino)uracil</name>
        <dbReference type="ChEBI" id="CHEBI:15934"/>
    </ligand>
</feature>
<feature type="binding site" evidence="1">
    <location>
        <begin position="57"/>
        <end position="59"/>
    </location>
    <ligand>
        <name>5-amino-6-(D-ribitylamino)uracil</name>
        <dbReference type="ChEBI" id="CHEBI:15934"/>
    </ligand>
</feature>
<feature type="binding site" evidence="1">
    <location>
        <begin position="81"/>
        <end position="83"/>
    </location>
    <ligand>
        <name>5-amino-6-(D-ribitylamino)uracil</name>
        <dbReference type="ChEBI" id="CHEBI:15934"/>
    </ligand>
</feature>
<feature type="binding site" evidence="1">
    <location>
        <begin position="86"/>
        <end position="87"/>
    </location>
    <ligand>
        <name>(2S)-2-hydroxy-3-oxobutyl phosphate</name>
        <dbReference type="ChEBI" id="CHEBI:58830"/>
    </ligand>
</feature>
<feature type="binding site" evidence="1">
    <location>
        <position position="114"/>
    </location>
    <ligand>
        <name>5-amino-6-(D-ribitylamino)uracil</name>
        <dbReference type="ChEBI" id="CHEBI:15934"/>
    </ligand>
</feature>
<feature type="binding site" evidence="1">
    <location>
        <position position="128"/>
    </location>
    <ligand>
        <name>(2S)-2-hydroxy-3-oxobutyl phosphate</name>
        <dbReference type="ChEBI" id="CHEBI:58830"/>
    </ligand>
</feature>
<name>RISB_YERPY</name>
<comment type="function">
    <text evidence="1">Catalyzes the formation of 6,7-dimethyl-8-ribityllumazine by condensation of 5-amino-6-(D-ribitylamino)uracil with 3,4-dihydroxy-2-butanone 4-phosphate. This is the penultimate step in the biosynthesis of riboflavin.</text>
</comment>
<comment type="catalytic activity">
    <reaction evidence="1">
        <text>(2S)-2-hydroxy-3-oxobutyl phosphate + 5-amino-6-(D-ribitylamino)uracil = 6,7-dimethyl-8-(1-D-ribityl)lumazine + phosphate + 2 H2O + H(+)</text>
        <dbReference type="Rhea" id="RHEA:26152"/>
        <dbReference type="ChEBI" id="CHEBI:15377"/>
        <dbReference type="ChEBI" id="CHEBI:15378"/>
        <dbReference type="ChEBI" id="CHEBI:15934"/>
        <dbReference type="ChEBI" id="CHEBI:43474"/>
        <dbReference type="ChEBI" id="CHEBI:58201"/>
        <dbReference type="ChEBI" id="CHEBI:58830"/>
        <dbReference type="EC" id="2.5.1.78"/>
    </reaction>
</comment>
<comment type="pathway">
    <text evidence="1">Cofactor biosynthesis; riboflavin biosynthesis; riboflavin from 2-hydroxy-3-oxobutyl phosphate and 5-amino-6-(D-ribitylamino)uracil: step 1/2.</text>
</comment>
<comment type="subunit">
    <text evidence="1">Forms an icosahedral capsid composed of 60 subunits, arranged as a dodecamer of pentamers.</text>
</comment>
<comment type="similarity">
    <text evidence="1">Belongs to the DMRL synthase family.</text>
</comment>
<reference key="1">
    <citation type="submission" date="2008-02" db="EMBL/GenBank/DDBJ databases">
        <title>Complete sequence of Yersinia pseudotuberculosis YPIII.</title>
        <authorList>
            <consortium name="US DOE Joint Genome Institute"/>
            <person name="Copeland A."/>
            <person name="Lucas S."/>
            <person name="Lapidus A."/>
            <person name="Glavina del Rio T."/>
            <person name="Dalin E."/>
            <person name="Tice H."/>
            <person name="Bruce D."/>
            <person name="Goodwin L."/>
            <person name="Pitluck S."/>
            <person name="Munk A.C."/>
            <person name="Brettin T."/>
            <person name="Detter J.C."/>
            <person name="Han C."/>
            <person name="Tapia R."/>
            <person name="Schmutz J."/>
            <person name="Larimer F."/>
            <person name="Land M."/>
            <person name="Hauser L."/>
            <person name="Challacombe J.F."/>
            <person name="Green L."/>
            <person name="Lindler L.E."/>
            <person name="Nikolich M.P."/>
            <person name="Richardson P."/>
        </authorList>
    </citation>
    <scope>NUCLEOTIDE SEQUENCE [LARGE SCALE GENOMIC DNA]</scope>
    <source>
        <strain>YPIII</strain>
    </source>
</reference>
<organism>
    <name type="scientific">Yersinia pseudotuberculosis serotype O:3 (strain YPIII)</name>
    <dbReference type="NCBI Taxonomy" id="502800"/>
    <lineage>
        <taxon>Bacteria</taxon>
        <taxon>Pseudomonadati</taxon>
        <taxon>Pseudomonadota</taxon>
        <taxon>Gammaproteobacteria</taxon>
        <taxon>Enterobacterales</taxon>
        <taxon>Yersiniaceae</taxon>
        <taxon>Yersinia</taxon>
    </lineage>
</organism>
<accession>B1JIE2</accession>
<proteinExistence type="inferred from homology"/>
<protein>
    <recommendedName>
        <fullName evidence="1">6,7-dimethyl-8-ribityllumazine synthase</fullName>
        <shortName evidence="1">DMRL synthase</shortName>
        <shortName evidence="1">LS</shortName>
        <shortName evidence="1">Lumazine synthase</shortName>
        <ecNumber evidence="1">2.5.1.78</ecNumber>
    </recommendedName>
</protein>
<keyword id="KW-0686">Riboflavin biosynthesis</keyword>
<keyword id="KW-0808">Transferase</keyword>
<sequence>MNVIEGVVATPNARVAIAIARFNNFINDSLLDGAIDALKRIGQVSDDNITVVWVPGAYELPLVANVLAKTNRYDAVIALGTVIRGGTAHFEYVAGEASSGLSSVAMNSDIPVAFGVLTTESIEQAIERAGTKAGNKGAEAALTALEMINVIKAIKG</sequence>